<proteinExistence type="inferred from homology"/>
<accession>Q7Y8I6</accession>
<name>NU4LM_CHRAS</name>
<keyword id="KW-0249">Electron transport</keyword>
<keyword id="KW-0472">Membrane</keyword>
<keyword id="KW-0496">Mitochondrion</keyword>
<keyword id="KW-0999">Mitochondrion inner membrane</keyword>
<keyword id="KW-0520">NAD</keyword>
<keyword id="KW-1185">Reference proteome</keyword>
<keyword id="KW-0679">Respiratory chain</keyword>
<keyword id="KW-1278">Translocase</keyword>
<keyword id="KW-0812">Transmembrane</keyword>
<keyword id="KW-1133">Transmembrane helix</keyword>
<keyword id="KW-0813">Transport</keyword>
<keyword id="KW-0830">Ubiquinone</keyword>
<feature type="chain" id="PRO_0000274998" description="NADH-ubiquinone oxidoreductase chain 4L">
    <location>
        <begin position="1"/>
        <end position="98"/>
    </location>
</feature>
<feature type="transmembrane region" description="Helical" evidence="3">
    <location>
        <begin position="1"/>
        <end position="21"/>
    </location>
</feature>
<feature type="transmembrane region" description="Helical" evidence="3">
    <location>
        <begin position="30"/>
        <end position="50"/>
    </location>
</feature>
<feature type="transmembrane region" description="Helical" evidence="3">
    <location>
        <begin position="61"/>
        <end position="81"/>
    </location>
</feature>
<sequence length="98" mass="10836">MSPILINMLLAFTISLIGLLIYRSHMMSSLLCLEGMMLSLFILTSTLALTMHFTLMTMMPIILLVFAACEAAIGLSLLVMVSNTYGLDYVQNLNLLQC</sequence>
<reference key="1">
    <citation type="journal article" date="2003" name="Mol. Phylogenet. Evol.">
        <title>Afrotherian phylogeny as inferred from complete mitochondrial genomes.</title>
        <authorList>
            <person name="Murata Y."/>
            <person name="Nikaido M."/>
            <person name="Sasaki T."/>
            <person name="Cao Y."/>
            <person name="Fukumoto Y."/>
            <person name="Hasegawa M."/>
            <person name="Okada N."/>
        </authorList>
    </citation>
    <scope>NUCLEOTIDE SEQUENCE [GENOMIC DNA]</scope>
</reference>
<comment type="function">
    <text evidence="1">Core subunit of the mitochondrial membrane respiratory chain NADH dehydrogenase (Complex I) which catalyzes electron transfer from NADH through the respiratory chain, using ubiquinone as an electron acceptor. Part of the enzyme membrane arm which is embedded in the lipid bilayer and involved in proton translocation.</text>
</comment>
<comment type="catalytic activity">
    <reaction evidence="1">
        <text>a ubiquinone + NADH + 5 H(+)(in) = a ubiquinol + NAD(+) + 4 H(+)(out)</text>
        <dbReference type="Rhea" id="RHEA:29091"/>
        <dbReference type="Rhea" id="RHEA-COMP:9565"/>
        <dbReference type="Rhea" id="RHEA-COMP:9566"/>
        <dbReference type="ChEBI" id="CHEBI:15378"/>
        <dbReference type="ChEBI" id="CHEBI:16389"/>
        <dbReference type="ChEBI" id="CHEBI:17976"/>
        <dbReference type="ChEBI" id="CHEBI:57540"/>
        <dbReference type="ChEBI" id="CHEBI:57945"/>
        <dbReference type="EC" id="7.1.1.2"/>
    </reaction>
    <physiologicalReaction direction="left-to-right" evidence="1">
        <dbReference type="Rhea" id="RHEA:29092"/>
    </physiologicalReaction>
</comment>
<comment type="subunit">
    <text evidence="2">Core subunit of respiratory chain NADH dehydrogenase (Complex I) which is composed of 45 different subunits.</text>
</comment>
<comment type="subcellular location">
    <subcellularLocation>
        <location evidence="2">Mitochondrion inner membrane</location>
        <topology evidence="3">Multi-pass membrane protein</topology>
    </subcellularLocation>
</comment>
<comment type="similarity">
    <text evidence="4">Belongs to the complex I subunit 4L family.</text>
</comment>
<gene>
    <name type="primary">MT-ND4L</name>
    <name type="synonym">MTND4L</name>
    <name type="synonym">NADH4L</name>
    <name type="synonym">ND4L</name>
</gene>
<protein>
    <recommendedName>
        <fullName>NADH-ubiquinone oxidoreductase chain 4L</fullName>
        <ecNumber>7.1.1.2</ecNumber>
    </recommendedName>
    <alternativeName>
        <fullName>NADH dehydrogenase subunit 4L</fullName>
    </alternativeName>
</protein>
<dbReference type="EC" id="7.1.1.2"/>
<dbReference type="EMBL" id="AB096866">
    <property type="protein sequence ID" value="BAC78420.1"/>
    <property type="molecule type" value="Genomic_DNA"/>
</dbReference>
<dbReference type="RefSeq" id="NP_861497.1">
    <property type="nucleotide sequence ID" value="NC_004920.1"/>
</dbReference>
<dbReference type="SMR" id="Q7Y8I6"/>
<dbReference type="GeneID" id="1467813"/>
<dbReference type="CTD" id="4539"/>
<dbReference type="OrthoDB" id="6146597at2759"/>
<dbReference type="Proteomes" id="UP000504623">
    <property type="component" value="Mitochondrion MT"/>
</dbReference>
<dbReference type="GO" id="GO:0005743">
    <property type="term" value="C:mitochondrial inner membrane"/>
    <property type="evidence" value="ECO:0000250"/>
    <property type="project" value="UniProtKB"/>
</dbReference>
<dbReference type="GO" id="GO:0045271">
    <property type="term" value="C:respiratory chain complex I"/>
    <property type="evidence" value="ECO:0000250"/>
    <property type="project" value="UniProtKB"/>
</dbReference>
<dbReference type="GO" id="GO:0008137">
    <property type="term" value="F:NADH dehydrogenase (ubiquinone) activity"/>
    <property type="evidence" value="ECO:0000250"/>
    <property type="project" value="UniProtKB"/>
</dbReference>
<dbReference type="GO" id="GO:0042773">
    <property type="term" value="P:ATP synthesis coupled electron transport"/>
    <property type="evidence" value="ECO:0007669"/>
    <property type="project" value="InterPro"/>
</dbReference>
<dbReference type="FunFam" id="1.10.287.3510:FF:000002">
    <property type="entry name" value="NADH-ubiquinone oxidoreductase chain 4L"/>
    <property type="match status" value="1"/>
</dbReference>
<dbReference type="Gene3D" id="1.10.287.3510">
    <property type="match status" value="1"/>
</dbReference>
<dbReference type="InterPro" id="IPR001133">
    <property type="entry name" value="NADH_UbQ_OxRdtase_chain4L/K"/>
</dbReference>
<dbReference type="InterPro" id="IPR039428">
    <property type="entry name" value="NUOK/Mnh_C1-like"/>
</dbReference>
<dbReference type="PANTHER" id="PTHR11434:SF0">
    <property type="entry name" value="NADH-UBIQUINONE OXIDOREDUCTASE CHAIN 4L"/>
    <property type="match status" value="1"/>
</dbReference>
<dbReference type="PANTHER" id="PTHR11434">
    <property type="entry name" value="NADH-UBIQUINONE OXIDOREDUCTASE SUBUNIT ND4L"/>
    <property type="match status" value="1"/>
</dbReference>
<dbReference type="Pfam" id="PF00420">
    <property type="entry name" value="Oxidored_q2"/>
    <property type="match status" value="1"/>
</dbReference>
<evidence type="ECO:0000250" key="1">
    <source>
        <dbReference type="UniProtKB" id="P03901"/>
    </source>
</evidence>
<evidence type="ECO:0000250" key="2">
    <source>
        <dbReference type="UniProtKB" id="P03902"/>
    </source>
</evidence>
<evidence type="ECO:0000255" key="3"/>
<evidence type="ECO:0000305" key="4"/>
<geneLocation type="mitochondrion"/>
<organism>
    <name type="scientific">Chrysochloris asiatica</name>
    <name type="common">Cape golden mole</name>
    <dbReference type="NCBI Taxonomy" id="185453"/>
    <lineage>
        <taxon>Eukaryota</taxon>
        <taxon>Metazoa</taxon>
        <taxon>Chordata</taxon>
        <taxon>Craniata</taxon>
        <taxon>Vertebrata</taxon>
        <taxon>Euteleostomi</taxon>
        <taxon>Mammalia</taxon>
        <taxon>Eutheria</taxon>
        <taxon>Afrotheria</taxon>
        <taxon>Chrysochloridae</taxon>
        <taxon>Chrysochlorinae</taxon>
        <taxon>Chrysochloris</taxon>
    </lineage>
</organism>